<reference evidence="17 19" key="1">
    <citation type="journal article" date="2000" name="Science">
        <title>The genome sequence of Drosophila melanogaster.</title>
        <authorList>
            <person name="Adams M.D."/>
            <person name="Celniker S.E."/>
            <person name="Holt R.A."/>
            <person name="Evans C.A."/>
            <person name="Gocayne J.D."/>
            <person name="Amanatides P.G."/>
            <person name="Scherer S.E."/>
            <person name="Li P.W."/>
            <person name="Hoskins R.A."/>
            <person name="Galle R.F."/>
            <person name="George R.A."/>
            <person name="Lewis S.E."/>
            <person name="Richards S."/>
            <person name="Ashburner M."/>
            <person name="Henderson S.N."/>
            <person name="Sutton G.G."/>
            <person name="Wortman J.R."/>
            <person name="Yandell M.D."/>
            <person name="Zhang Q."/>
            <person name="Chen L.X."/>
            <person name="Brandon R.C."/>
            <person name="Rogers Y.-H.C."/>
            <person name="Blazej R.G."/>
            <person name="Champe M."/>
            <person name="Pfeiffer B.D."/>
            <person name="Wan K.H."/>
            <person name="Doyle C."/>
            <person name="Baxter E.G."/>
            <person name="Helt G."/>
            <person name="Nelson C.R."/>
            <person name="Miklos G.L.G."/>
            <person name="Abril J.F."/>
            <person name="Agbayani A."/>
            <person name="An H.-J."/>
            <person name="Andrews-Pfannkoch C."/>
            <person name="Baldwin D."/>
            <person name="Ballew R.M."/>
            <person name="Basu A."/>
            <person name="Baxendale J."/>
            <person name="Bayraktaroglu L."/>
            <person name="Beasley E.M."/>
            <person name="Beeson K.Y."/>
            <person name="Benos P.V."/>
            <person name="Berman B.P."/>
            <person name="Bhandari D."/>
            <person name="Bolshakov S."/>
            <person name="Borkova D."/>
            <person name="Botchan M.R."/>
            <person name="Bouck J."/>
            <person name="Brokstein P."/>
            <person name="Brottier P."/>
            <person name="Burtis K.C."/>
            <person name="Busam D.A."/>
            <person name="Butler H."/>
            <person name="Cadieu E."/>
            <person name="Center A."/>
            <person name="Chandra I."/>
            <person name="Cherry J.M."/>
            <person name="Cawley S."/>
            <person name="Dahlke C."/>
            <person name="Davenport L.B."/>
            <person name="Davies P."/>
            <person name="de Pablos B."/>
            <person name="Delcher A."/>
            <person name="Deng Z."/>
            <person name="Mays A.D."/>
            <person name="Dew I."/>
            <person name="Dietz S.M."/>
            <person name="Dodson K."/>
            <person name="Doup L.E."/>
            <person name="Downes M."/>
            <person name="Dugan-Rocha S."/>
            <person name="Dunkov B.C."/>
            <person name="Dunn P."/>
            <person name="Durbin K.J."/>
            <person name="Evangelista C.C."/>
            <person name="Ferraz C."/>
            <person name="Ferriera S."/>
            <person name="Fleischmann W."/>
            <person name="Fosler C."/>
            <person name="Gabrielian A.E."/>
            <person name="Garg N.S."/>
            <person name="Gelbart W.M."/>
            <person name="Glasser K."/>
            <person name="Glodek A."/>
            <person name="Gong F."/>
            <person name="Gorrell J.H."/>
            <person name="Gu Z."/>
            <person name="Guan P."/>
            <person name="Harris M."/>
            <person name="Harris N.L."/>
            <person name="Harvey D.A."/>
            <person name="Heiman T.J."/>
            <person name="Hernandez J.R."/>
            <person name="Houck J."/>
            <person name="Hostin D."/>
            <person name="Houston K.A."/>
            <person name="Howland T.J."/>
            <person name="Wei M.-H."/>
            <person name="Ibegwam C."/>
            <person name="Jalali M."/>
            <person name="Kalush F."/>
            <person name="Karpen G.H."/>
            <person name="Ke Z."/>
            <person name="Kennison J.A."/>
            <person name="Ketchum K.A."/>
            <person name="Kimmel B.E."/>
            <person name="Kodira C.D."/>
            <person name="Kraft C.L."/>
            <person name="Kravitz S."/>
            <person name="Kulp D."/>
            <person name="Lai Z."/>
            <person name="Lasko P."/>
            <person name="Lei Y."/>
            <person name="Levitsky A.A."/>
            <person name="Li J.H."/>
            <person name="Li Z."/>
            <person name="Liang Y."/>
            <person name="Lin X."/>
            <person name="Liu X."/>
            <person name="Mattei B."/>
            <person name="McIntosh T.C."/>
            <person name="McLeod M.P."/>
            <person name="McPherson D."/>
            <person name="Merkulov G."/>
            <person name="Milshina N.V."/>
            <person name="Mobarry C."/>
            <person name="Morris J."/>
            <person name="Moshrefi A."/>
            <person name="Mount S.M."/>
            <person name="Moy M."/>
            <person name="Murphy B."/>
            <person name="Murphy L."/>
            <person name="Muzny D.M."/>
            <person name="Nelson D.L."/>
            <person name="Nelson D.R."/>
            <person name="Nelson K.A."/>
            <person name="Nixon K."/>
            <person name="Nusskern D.R."/>
            <person name="Pacleb J.M."/>
            <person name="Palazzolo M."/>
            <person name="Pittman G.S."/>
            <person name="Pan S."/>
            <person name="Pollard J."/>
            <person name="Puri V."/>
            <person name="Reese M.G."/>
            <person name="Reinert K."/>
            <person name="Remington K."/>
            <person name="Saunders R.D.C."/>
            <person name="Scheeler F."/>
            <person name="Shen H."/>
            <person name="Shue B.C."/>
            <person name="Siden-Kiamos I."/>
            <person name="Simpson M."/>
            <person name="Skupski M.P."/>
            <person name="Smith T.J."/>
            <person name="Spier E."/>
            <person name="Spradling A.C."/>
            <person name="Stapleton M."/>
            <person name="Strong R."/>
            <person name="Sun E."/>
            <person name="Svirskas R."/>
            <person name="Tector C."/>
            <person name="Turner R."/>
            <person name="Venter E."/>
            <person name="Wang A.H."/>
            <person name="Wang X."/>
            <person name="Wang Z.-Y."/>
            <person name="Wassarman D.A."/>
            <person name="Weinstock G.M."/>
            <person name="Weissenbach J."/>
            <person name="Williams S.M."/>
            <person name="Woodage T."/>
            <person name="Worley K.C."/>
            <person name="Wu D."/>
            <person name="Yang S."/>
            <person name="Yao Q.A."/>
            <person name="Ye J."/>
            <person name="Yeh R.-F."/>
            <person name="Zaveri J.S."/>
            <person name="Zhan M."/>
            <person name="Zhang G."/>
            <person name="Zhao Q."/>
            <person name="Zheng L."/>
            <person name="Zheng X.H."/>
            <person name="Zhong F.N."/>
            <person name="Zhong W."/>
            <person name="Zhou X."/>
            <person name="Zhu S.C."/>
            <person name="Zhu X."/>
            <person name="Smith H.O."/>
            <person name="Gibbs R.A."/>
            <person name="Myers E.W."/>
            <person name="Rubin G.M."/>
            <person name="Venter J.C."/>
        </authorList>
    </citation>
    <scope>NUCLEOTIDE SEQUENCE [LARGE SCALE GENOMIC DNA]</scope>
    <source>
        <strain>Berkeley</strain>
    </source>
</reference>
<reference key="2">
    <citation type="journal article" date="2002" name="Genome Biol.">
        <title>Annotation of the Drosophila melanogaster euchromatic genome: a systematic review.</title>
        <authorList>
            <person name="Misra S."/>
            <person name="Crosby M.A."/>
            <person name="Mungall C.J."/>
            <person name="Matthews B.B."/>
            <person name="Campbell K.S."/>
            <person name="Hradecky P."/>
            <person name="Huang Y."/>
            <person name="Kaminker J.S."/>
            <person name="Millburn G.H."/>
            <person name="Prochnik S.E."/>
            <person name="Smith C.D."/>
            <person name="Tupy J.L."/>
            <person name="Whitfield E.J."/>
            <person name="Bayraktaroglu L."/>
            <person name="Berman B.P."/>
            <person name="Bettencourt B.R."/>
            <person name="Celniker S.E."/>
            <person name="de Grey A.D.N.J."/>
            <person name="Drysdale R.A."/>
            <person name="Harris N.L."/>
            <person name="Richter J."/>
            <person name="Russo S."/>
            <person name="Schroeder A.J."/>
            <person name="Shu S.Q."/>
            <person name="Stapleton M."/>
            <person name="Yamada C."/>
            <person name="Ashburner M."/>
            <person name="Gelbart W.M."/>
            <person name="Rubin G.M."/>
            <person name="Lewis S.E."/>
        </authorList>
    </citation>
    <scope>GENOME REANNOTATION</scope>
    <source>
        <strain>Berkeley</strain>
    </source>
</reference>
<reference key="3">
    <citation type="journal article" date="2004" name="Neuron">
        <title>Nervous wreck, an SH3 adaptor protein that interacts with Wsp, regulates synaptic growth in Drosophila.</title>
        <authorList>
            <person name="Coyle I.P."/>
            <person name="Koh Y.H."/>
            <person name="Lee W.C."/>
            <person name="Slind J."/>
            <person name="Fergestad T."/>
            <person name="Littleton J.T."/>
            <person name="Ganetzky B."/>
        </authorList>
    </citation>
    <scope>FUNCTION</scope>
    <scope>SUBCELLULAR LOCATION</scope>
    <scope>INTERACTION WITH WASP</scope>
    <scope>DISRUPTION PHENOTYPE</scope>
    <scope>TISSUE SPECIFICITY</scope>
    <scope>DEVELOPMENTAL STAGE</scope>
</reference>
<reference key="4">
    <citation type="journal article" date="2008" name="J. Neurosci.">
        <title>Nervous wreck and Cdc42 cooperate to regulate endocytic actin assembly during synaptic growth.</title>
        <authorList>
            <person name="Rodal A.A."/>
            <person name="Motola-Barnes R.N."/>
            <person name="Littleton J.T."/>
        </authorList>
    </citation>
    <scope>FUNCTION</scope>
    <scope>SUBCELLULAR LOCATION</scope>
    <scope>DISRUPTION PHENOTYPE</scope>
    <scope>INTERACTION WITH WASP; DAP160 AND SHI</scope>
</reference>
<reference key="5">
    <citation type="journal article" date="2008" name="Neuron">
        <title>Nervous wreck interacts with thickveins and the endocytic machinery to attenuate retrograde BMP signaling during synaptic growth.</title>
        <authorList>
            <person name="O'Connor-Giles K.M."/>
            <person name="Ho L.L."/>
            <person name="Ganetzky B."/>
        </authorList>
    </citation>
    <scope>FUNCTION</scope>
    <scope>DISRUPTION PHENOTYPE</scope>
    <scope>INTERACTION WITH DAP160 AND SHI</scope>
</reference>
<reference key="6">
    <citation type="journal article" date="2011" name="J. Cell Biol.">
        <title>A presynaptic endosomal trafficking pathway controls synaptic growth signaling.</title>
        <authorList>
            <person name="Rodal A.A."/>
            <person name="Blunk A.D."/>
            <person name="Akbergenova Y."/>
            <person name="Jorquera R.A."/>
            <person name="Buhl L.K."/>
            <person name="Littleton J.T."/>
        </authorList>
    </citation>
    <scope>FUNCTION</scope>
    <scope>DISRUPTION PHENOTYPE</scope>
    <scope>INTERACTION WITH SNX16</scope>
    <scope>SUBCELLULAR LOCATION</scope>
</reference>
<reference key="7">
    <citation type="journal article" date="2013" name="Mol. Biol. Cell">
        <title>Formation of membrane ridges and scallops by the F-BAR protein Nervous Wreck.</title>
        <authorList>
            <person name="Becalska A.N."/>
            <person name="Kelley C.F."/>
            <person name="Berciu C."/>
            <person name="Stanishneva-Konovalova T.B."/>
            <person name="Fu X."/>
            <person name="Wang S."/>
            <person name="Sokolova O.S."/>
            <person name="Nicastro D."/>
            <person name="Rodal A.A."/>
        </authorList>
    </citation>
    <scope>FUNCTION</scope>
    <scope>DOMAIN</scope>
    <scope>LIPID-BINDING</scope>
    <scope>SUBUNIT</scope>
    <scope>STRUCTURE BY ELECTRON MICROSCOPY (20 ANGSTROMS) OF 1-428</scope>
</reference>
<reference key="8">
    <citation type="journal article" date="2015" name="Cell Rep.">
        <title>Membrane Charge Directs the Outcome of F-BAR Domain Lipid Binding and Autoregulation.</title>
        <authorList>
            <person name="Kelley C.F."/>
            <person name="Messelaar E.M."/>
            <person name="Eskin T.L."/>
            <person name="Wang S."/>
            <person name="Song K."/>
            <person name="Vishnia K."/>
            <person name="Becalska A.N."/>
            <person name="Shupliakov O."/>
            <person name="Hagan M.F."/>
            <person name="Danino D."/>
            <person name="Sokolova O.S."/>
            <person name="Nicastro D."/>
            <person name="Rodal A.A."/>
        </authorList>
    </citation>
    <scope>FUNCTION</scope>
    <scope>DISRUPTION PHENOTYPE</scope>
    <scope>SUBCELLULAR LOCATION</scope>
    <scope>INTERACTION WITH DAP160</scope>
    <scope>LIPID-BINDING</scope>
    <scope>DOMAIN</scope>
    <scope>TISSUE SPECIFICITY</scope>
    <scope>MUTAGENESIS OF GLU-676</scope>
</reference>
<reference key="9">
    <citation type="journal article" date="2016" name="J. Cell Sci.">
        <title>BAR-SH3 sorting nexins are conserved interacting proteins of Nervous wreck that organize synapses and promote neurotransmission.</title>
        <authorList>
            <person name="Ukken F.P."/>
            <person name="Bruckner J.J."/>
            <person name="Weir K.L."/>
            <person name="Hope S.J."/>
            <person name="Sison S.L."/>
            <person name="Birschbach R.M."/>
            <person name="Hicks L."/>
            <person name="Taylor K.L."/>
            <person name="Dent E.W."/>
            <person name="Gonsalvez G.B."/>
            <person name="O'Connor-Giles K.M."/>
        </authorList>
    </citation>
    <scope>FUNCTION</scope>
    <scope>SUBCELLULAR LOCATION</scope>
    <scope>INTERACTION WITH SH3PX1</scope>
</reference>
<reference key="10">
    <citation type="journal article" date="2016" name="Proc. Natl. Acad. Sci. U.S.A.">
        <title>Coordinated autoinhibition of F-BAR domain membrane binding and WASp activation by Nervous Wreck.</title>
        <authorList>
            <person name="Stanishneva-Konovalova T.B."/>
            <person name="Kelley C.F."/>
            <person name="Eskin T.L."/>
            <person name="Messelaar E.M."/>
            <person name="Wasserman S.A."/>
            <person name="Sokolova O.S."/>
            <person name="Rodal A.A."/>
        </authorList>
    </citation>
    <scope>FUNCTION</scope>
    <scope>SUBUNIT</scope>
    <scope>INTERACTION WITH WASP</scope>
    <scope>LIPID-BINDING</scope>
    <scope>DOMAIN</scope>
    <scope>STRUCTURE BY ELECTRON MICROSCOPY (20 ANGSTROMS)</scope>
</reference>
<reference key="11">
    <citation type="journal article" date="2018" name="Exp. Mol. Med.">
        <title>Regulation of synaptic architecture and synaptic vesicle pools by Nervous wreck at Drosophila Type 1b glutamatergic synapses.</title>
        <authorList>
            <person name="Hur J.H."/>
            <person name="Lee S.H."/>
            <person name="Kim A.Y."/>
            <person name="Koh Y.H."/>
        </authorList>
    </citation>
    <scope>FUNCTION</scope>
    <scope>DISRUPTION PHENOTYPE</scope>
    <scope>SUBCELLULAR LOCATION</scope>
    <scope>IDENTIFICATION IN A COMPLEX WITH SYN AND SYT1</scope>
    <scope>TISSUE SPECIFICITY</scope>
</reference>
<keyword id="KW-0025">Alternative splicing</keyword>
<keyword id="KW-1003">Cell membrane</keyword>
<keyword id="KW-0966">Cell projection</keyword>
<keyword id="KW-0968">Cytoplasmic vesicle</keyword>
<keyword id="KW-0967">Endosome</keyword>
<keyword id="KW-0446">Lipid-binding</keyword>
<keyword id="KW-0472">Membrane</keyword>
<keyword id="KW-1185">Reference proteome</keyword>
<keyword id="KW-0677">Repeat</keyword>
<keyword id="KW-0728">SH3 domain</keyword>
<keyword id="KW-0770">Synapse</keyword>
<dbReference type="EMBL" id="AE014296">
    <property type="protein sequence ID" value="AFH04360.1"/>
    <property type="molecule type" value="Genomic_DNA"/>
</dbReference>
<dbReference type="EMBL" id="AE014296">
    <property type="protein sequence ID" value="AFH04361.1"/>
    <property type="molecule type" value="Genomic_DNA"/>
</dbReference>
<dbReference type="EMBL" id="AE014296">
    <property type="protein sequence ID" value="AFH04362.1"/>
    <property type="molecule type" value="Genomic_DNA"/>
</dbReference>
<dbReference type="EMBL" id="AE014296">
    <property type="protein sequence ID" value="AFH04363.1"/>
    <property type="molecule type" value="Genomic_DNA"/>
</dbReference>
<dbReference type="EMBL" id="AE014296">
    <property type="protein sequence ID" value="AAF50313.4"/>
    <property type="molecule type" value="Genomic_DNA"/>
</dbReference>
<dbReference type="EMBL" id="AE014296">
    <property type="protein sequence ID" value="AHN58018.1"/>
    <property type="molecule type" value="Genomic_DNA"/>
</dbReference>
<dbReference type="EMBL" id="AE014296">
    <property type="protein sequence ID" value="AHN58019.1"/>
    <property type="molecule type" value="Genomic_DNA"/>
</dbReference>
<dbReference type="EMBL" id="AE014296">
    <property type="protein sequence ID" value="AHN58020.1"/>
    <property type="molecule type" value="Genomic_DNA"/>
</dbReference>
<dbReference type="EMBL" id="AE014296">
    <property type="protein sequence ID" value="AHN58021.1"/>
    <property type="molecule type" value="Genomic_DNA"/>
</dbReference>
<dbReference type="EMBL" id="AE014296">
    <property type="protein sequence ID" value="AHN58022.1"/>
    <property type="molecule type" value="Genomic_DNA"/>
</dbReference>
<dbReference type="RefSeq" id="NP_001246689.1">
    <molecule id="X2JAU8-7"/>
    <property type="nucleotide sequence ID" value="NM_001259760.2"/>
</dbReference>
<dbReference type="RefSeq" id="NP_001246690.1">
    <molecule id="X2JAU8-8"/>
    <property type="nucleotide sequence ID" value="NM_001259761.2"/>
</dbReference>
<dbReference type="RefSeq" id="NP_001246691.1">
    <molecule id="X2JAU8-2"/>
    <property type="nucleotide sequence ID" value="NM_001259762.2"/>
</dbReference>
<dbReference type="RefSeq" id="NP_001246692.1">
    <molecule id="X2JAU8-9"/>
    <property type="nucleotide sequence ID" value="NM_001259763.2"/>
</dbReference>
<dbReference type="RefSeq" id="NP_001286993.1">
    <molecule id="X2JAU8-3"/>
    <property type="nucleotide sequence ID" value="NM_001300064.1"/>
</dbReference>
<dbReference type="RefSeq" id="NP_001286994.1">
    <molecule id="X2JAU8-1"/>
    <property type="nucleotide sequence ID" value="NM_001300065.1"/>
</dbReference>
<dbReference type="RefSeq" id="NP_001286995.1">
    <molecule id="X2JAU8-6"/>
    <property type="nucleotide sequence ID" value="NM_001300066.1"/>
</dbReference>
<dbReference type="RefSeq" id="NP_001286996.1">
    <molecule id="X2JAU8-5"/>
    <property type="nucleotide sequence ID" value="NM_001300067.1"/>
</dbReference>
<dbReference type="RefSeq" id="NP_001286997.1">
    <molecule id="X2JAU8-4"/>
    <property type="nucleotide sequence ID" value="NM_001300068.1"/>
</dbReference>
<dbReference type="RefSeq" id="NP_648290.3">
    <molecule id="X2JAU8-2"/>
    <property type="nucleotide sequence ID" value="NM_140033.3"/>
</dbReference>
<dbReference type="SMR" id="X2JAU8"/>
<dbReference type="FunCoup" id="X2JAU8">
    <property type="interactions" value="1037"/>
</dbReference>
<dbReference type="IntAct" id="X2JAU8">
    <property type="interactions" value="25"/>
</dbReference>
<dbReference type="STRING" id="7227.FBpp0310643"/>
<dbReference type="GlyGen" id="X2JAU8">
    <property type="glycosylation" value="1 site"/>
</dbReference>
<dbReference type="PaxDb" id="7227-FBpp0301205"/>
<dbReference type="EnsemblMetazoa" id="FBtr0309276">
    <molecule id="X2JAU8-7"/>
    <property type="protein sequence ID" value="FBpp0301203"/>
    <property type="gene ID" value="FBgn0263456"/>
</dbReference>
<dbReference type="EnsemblMetazoa" id="FBtr0309277">
    <molecule id="X2JAU8-8"/>
    <property type="protein sequence ID" value="FBpp0301204"/>
    <property type="gene ID" value="FBgn0263456"/>
</dbReference>
<dbReference type="EnsemblMetazoa" id="FBtr0309278">
    <molecule id="X2JAU8-2"/>
    <property type="protein sequence ID" value="FBpp0301205"/>
    <property type="gene ID" value="FBgn0263456"/>
</dbReference>
<dbReference type="EnsemblMetazoa" id="FBtr0309280">
    <molecule id="X2JAU8-9"/>
    <property type="protein sequence ID" value="FBpp0301207"/>
    <property type="gene ID" value="FBgn0263456"/>
</dbReference>
<dbReference type="EnsemblMetazoa" id="FBtr0331857">
    <molecule id="X2JAU8-2"/>
    <property type="protein sequence ID" value="FBpp0304241"/>
    <property type="gene ID" value="FBgn0263456"/>
</dbReference>
<dbReference type="EnsemblMetazoa" id="FBtr0344238">
    <molecule id="X2JAU8-3"/>
    <property type="protein sequence ID" value="FBpp0310642"/>
    <property type="gene ID" value="FBgn0263456"/>
</dbReference>
<dbReference type="EnsemblMetazoa" id="FBtr0344239">
    <molecule id="X2JAU8-1"/>
    <property type="protein sequence ID" value="FBpp0310643"/>
    <property type="gene ID" value="FBgn0263456"/>
</dbReference>
<dbReference type="EnsemblMetazoa" id="FBtr0344240">
    <molecule id="X2JAU8-6"/>
    <property type="protein sequence ID" value="FBpp0310644"/>
    <property type="gene ID" value="FBgn0263456"/>
</dbReference>
<dbReference type="EnsemblMetazoa" id="FBtr0344241">
    <molecule id="X2JAU8-5"/>
    <property type="protein sequence ID" value="FBpp0310645"/>
    <property type="gene ID" value="FBgn0263456"/>
</dbReference>
<dbReference type="EnsemblMetazoa" id="FBtr0344242">
    <molecule id="X2JAU8-4"/>
    <property type="protein sequence ID" value="FBpp0310646"/>
    <property type="gene ID" value="FBgn0263456"/>
</dbReference>
<dbReference type="GeneID" id="39052"/>
<dbReference type="KEGG" id="dme:Dmel_CG43479"/>
<dbReference type="UCSC" id="CG4684-RA">
    <property type="organism name" value="d. melanogaster"/>
</dbReference>
<dbReference type="AGR" id="FB:FBgn0263456"/>
<dbReference type="CTD" id="39052"/>
<dbReference type="FlyBase" id="FBgn0263456">
    <property type="gene designation" value="nwk"/>
</dbReference>
<dbReference type="VEuPathDB" id="VectorBase:FBgn0263456"/>
<dbReference type="eggNOG" id="KOG3565">
    <property type="taxonomic scope" value="Eukaryota"/>
</dbReference>
<dbReference type="GeneTree" id="ENSGT00510000046732"/>
<dbReference type="HOGENOM" id="CLU_013546_0_0_1"/>
<dbReference type="InParanoid" id="X2JAU8"/>
<dbReference type="OMA" id="TPMMEEP"/>
<dbReference type="OrthoDB" id="10065861at2759"/>
<dbReference type="SignaLink" id="X2JAU8"/>
<dbReference type="BioGRID-ORCS" id="39052">
    <property type="hits" value="0 hits in 3 CRISPR screens"/>
</dbReference>
<dbReference type="GenomeRNAi" id="39052"/>
<dbReference type="PRO" id="PR:X2JAU8"/>
<dbReference type="Proteomes" id="UP000000803">
    <property type="component" value="Chromosome 3L"/>
</dbReference>
<dbReference type="Bgee" id="FBgn0263456">
    <property type="expression patterns" value="Expressed in proximal medullary amacrine neuron Pm2 (Drosophila) in insect head and 162 other cell types or tissues"/>
</dbReference>
<dbReference type="ExpressionAtlas" id="X2JAU8">
    <property type="expression patterns" value="baseline and differential"/>
</dbReference>
<dbReference type="GO" id="GO:0030424">
    <property type="term" value="C:axon"/>
    <property type="evidence" value="ECO:0007669"/>
    <property type="project" value="UniProtKB-SubCell"/>
</dbReference>
<dbReference type="GO" id="GO:0005737">
    <property type="term" value="C:cytoplasm"/>
    <property type="evidence" value="ECO:0000314"/>
    <property type="project" value="FlyBase"/>
</dbReference>
<dbReference type="GO" id="GO:0031594">
    <property type="term" value="C:neuromuscular junction"/>
    <property type="evidence" value="ECO:0000314"/>
    <property type="project" value="UniProtKB"/>
</dbReference>
<dbReference type="GO" id="GO:0042734">
    <property type="term" value="C:presynaptic membrane"/>
    <property type="evidence" value="ECO:0007669"/>
    <property type="project" value="UniProtKB-SubCell"/>
</dbReference>
<dbReference type="GO" id="GO:0055037">
    <property type="term" value="C:recycling endosome"/>
    <property type="evidence" value="ECO:0000314"/>
    <property type="project" value="FlyBase"/>
</dbReference>
<dbReference type="GO" id="GO:0008021">
    <property type="term" value="C:synaptic vesicle"/>
    <property type="evidence" value="ECO:0007669"/>
    <property type="project" value="UniProtKB-SubCell"/>
</dbReference>
<dbReference type="GO" id="GO:0043325">
    <property type="term" value="F:phosphatidylinositol-3,4-bisphosphate binding"/>
    <property type="evidence" value="ECO:0000314"/>
    <property type="project" value="UniProtKB"/>
</dbReference>
<dbReference type="GO" id="GO:0005546">
    <property type="term" value="F:phosphatidylinositol-4,5-bisphosphate binding"/>
    <property type="evidence" value="ECO:0000314"/>
    <property type="project" value="UniProtKB"/>
</dbReference>
<dbReference type="GO" id="GO:0005543">
    <property type="term" value="F:phospholipid binding"/>
    <property type="evidence" value="ECO:0000255"/>
    <property type="project" value="FlyBase"/>
</dbReference>
<dbReference type="GO" id="GO:0061024">
    <property type="term" value="P:membrane organization"/>
    <property type="evidence" value="ECO:0000315"/>
    <property type="project" value="GO_Central"/>
</dbReference>
<dbReference type="GO" id="GO:0045886">
    <property type="term" value="P:negative regulation of synaptic assembly at neuromuscular junction"/>
    <property type="evidence" value="ECO:0000315"/>
    <property type="project" value="FlyBase"/>
</dbReference>
<dbReference type="GO" id="GO:0007274">
    <property type="term" value="P:neuromuscular synaptic transmission"/>
    <property type="evidence" value="ECO:0000315"/>
    <property type="project" value="FlyBase"/>
</dbReference>
<dbReference type="GO" id="GO:2000601">
    <property type="term" value="P:positive regulation of Arp2/3 complex-mediated actin nucleation"/>
    <property type="evidence" value="ECO:0000314"/>
    <property type="project" value="UniProtKB"/>
</dbReference>
<dbReference type="GO" id="GO:0001881">
    <property type="term" value="P:receptor recycling"/>
    <property type="evidence" value="ECO:0000316"/>
    <property type="project" value="FlyBase"/>
</dbReference>
<dbReference type="GO" id="GO:0030833">
    <property type="term" value="P:regulation of actin filament polymerization"/>
    <property type="evidence" value="ECO:0000314"/>
    <property type="project" value="FlyBase"/>
</dbReference>
<dbReference type="GO" id="GO:0008582">
    <property type="term" value="P:regulation of synaptic assembly at neuromuscular junction"/>
    <property type="evidence" value="ECO:0000315"/>
    <property type="project" value="FlyBase"/>
</dbReference>
<dbReference type="CDD" id="cd11761">
    <property type="entry name" value="SH3_FCHSD_1"/>
    <property type="match status" value="1"/>
</dbReference>
<dbReference type="FunFam" id="2.30.30.40:FF:000107">
    <property type="entry name" value="FCH and double SH3 domains 1"/>
    <property type="match status" value="1"/>
</dbReference>
<dbReference type="FunFam" id="1.20.1270.60:FF:000039">
    <property type="entry name" value="FCH and double SH3 domains protein"/>
    <property type="match status" value="1"/>
</dbReference>
<dbReference type="FunFam" id="2.30.30.40:FF:000155">
    <property type="entry name" value="FCH and double SH3 domains protein"/>
    <property type="match status" value="1"/>
</dbReference>
<dbReference type="Gene3D" id="1.20.1270.60">
    <property type="entry name" value="Arfaptin homology (AH) domain/BAR domain"/>
    <property type="match status" value="1"/>
</dbReference>
<dbReference type="Gene3D" id="2.30.30.40">
    <property type="entry name" value="SH3 Domains"/>
    <property type="match status" value="2"/>
</dbReference>
<dbReference type="InterPro" id="IPR027267">
    <property type="entry name" value="AH/BAR_dom_sf"/>
</dbReference>
<dbReference type="InterPro" id="IPR031160">
    <property type="entry name" value="F_BAR"/>
</dbReference>
<dbReference type="InterPro" id="IPR001060">
    <property type="entry name" value="FCH_dom"/>
</dbReference>
<dbReference type="InterPro" id="IPR035460">
    <property type="entry name" value="FCHSD_SH3_1"/>
</dbReference>
<dbReference type="InterPro" id="IPR036028">
    <property type="entry name" value="SH3-like_dom_sf"/>
</dbReference>
<dbReference type="InterPro" id="IPR001452">
    <property type="entry name" value="SH3_domain"/>
</dbReference>
<dbReference type="PANTHER" id="PTHR15735">
    <property type="entry name" value="FCH AND DOUBLE SH3 DOMAINS PROTEIN"/>
    <property type="match status" value="1"/>
</dbReference>
<dbReference type="PANTHER" id="PTHR15735:SF21">
    <property type="entry name" value="PROTEIN NERVOUS WRECK"/>
    <property type="match status" value="1"/>
</dbReference>
<dbReference type="Pfam" id="PF00611">
    <property type="entry name" value="FCH"/>
    <property type="match status" value="1"/>
</dbReference>
<dbReference type="Pfam" id="PF00018">
    <property type="entry name" value="SH3_1"/>
    <property type="match status" value="2"/>
</dbReference>
<dbReference type="PRINTS" id="PR00452">
    <property type="entry name" value="SH3DOMAIN"/>
</dbReference>
<dbReference type="SMART" id="SM00055">
    <property type="entry name" value="FCH"/>
    <property type="match status" value="1"/>
</dbReference>
<dbReference type="SMART" id="SM00326">
    <property type="entry name" value="SH3"/>
    <property type="match status" value="2"/>
</dbReference>
<dbReference type="SUPFAM" id="SSF103657">
    <property type="entry name" value="BAR/IMD domain-like"/>
    <property type="match status" value="1"/>
</dbReference>
<dbReference type="SUPFAM" id="SSF50044">
    <property type="entry name" value="SH3-domain"/>
    <property type="match status" value="2"/>
</dbReference>
<dbReference type="PROSITE" id="PS51741">
    <property type="entry name" value="F_BAR"/>
    <property type="match status" value="1"/>
</dbReference>
<dbReference type="PROSITE" id="PS50002">
    <property type="entry name" value="SH3"/>
    <property type="match status" value="2"/>
</dbReference>
<comment type="function">
    <text evidence="4 5 6 7 8 9 10 11 12">Adapter protein that provides a link between vesicular membrane traffic and the actin assembly machinery. Acts together with Cdc42 to stimulate actin nucleation mediated by WASp and the ARP2/3 complex (PubMed:18701694, PubMed:27601635). Binds to membranes enriched in phosphatidylinositol 4,5-bisphosphate and causes local membrane deformation (PubMed:23761074, PubMed:26686642). Required for normal structure and function of synapses at the neuromuscular junction (PubMed:14980202, PubMed:18498733, PubMed:18701694, PubMed:21464232, PubMed:26567222, PubMed:26686642, PubMed:27601635, PubMed:29568072). Plays a role in synaptic vesicle trafficking (PubMed:29568072). Required for the release of a normal number of synaptic vesicles per action potential (PubMed:26567222).</text>
</comment>
<comment type="subunit">
    <text evidence="4 5 6 7 9 10 11 12 16">Homodimer (Probable) (PubMed:27601635). Interacts (via SH3 domain 1) with WASp (PubMed:14980202, PubMed:18701694, PubMed:27601635). Interacts (via SH3 domain 1) with shi/dynamin (PubMed:18498733, PubMed:18701694). Interacts (via SH3 domain 2) with Dap160 (PubMed:18498733, PubMed:18701694, PubMed:26686642). Interacts (via F-BAR domain) with SH3PX1 (PubMed:26567222). Interacts (via SH3 domain 2) with Snx16 (PubMed:21464232). Identified in a complex with Syn and Syt1 (PubMed:29568072).</text>
</comment>
<comment type="interaction">
    <interactant intactId="EBI-167691">
        <id>X2JAU8</id>
    </interactant>
    <interactant intactId="EBI-132019">
        <id>Q9VAT0</id>
        <label>WASp</label>
    </interactant>
    <organismsDiffer>false</organismsDiffer>
    <experiments>3</experiments>
</comment>
<comment type="subcellular location">
    <subcellularLocation>
        <location evidence="4 7 10 12">Endomembrane system</location>
    </subcellularLocation>
    <subcellularLocation>
        <location evidence="12">Synapse</location>
    </subcellularLocation>
    <subcellularLocation>
        <location evidence="4 6 9 10 11">Cell projection</location>
        <location evidence="4 6 9 10 11">Axon</location>
    </subcellularLocation>
    <subcellularLocation>
        <location evidence="9">Presynaptic cell membrane</location>
    </subcellularLocation>
    <subcellularLocation>
        <location evidence="12">Cytoplasmic vesicle</location>
        <location evidence="12">Secretory vesicle</location>
        <location evidence="12">Synaptic vesicle</location>
    </subcellularLocation>
    <subcellularLocation>
        <location evidence="7">Recycling endosome</location>
    </subcellularLocation>
    <text evidence="4 6 7 9 10 11 12">Detected at presynaptic axon terminals at the neuromuscular junction (PubMed:14980202, PubMed:18701694, PubMed:21464232, PubMed:26567222, PubMed:26686642, PubMed:27601635, PubMed:29568072). Colocalizes with Cdc42 and Rab11 (PubMed:18701694, PubMed:21464232).</text>
</comment>
<comment type="alternative products">
    <event type="alternative splicing"/>
    <isoform>
        <id>X2JAU8-1</id>
        <name>1</name>
        <name>I</name>
        <sequence type="displayed"/>
    </isoform>
    <isoform>
        <id>X2JAU8-2</id>
        <name>2</name>
        <name>D</name>
        <name>G</name>
        <sequence type="described" ref="VSP_060059"/>
    </isoform>
    <isoform>
        <id>X2JAU8-3</id>
        <name>3</name>
        <name>H</name>
        <sequence type="described" ref="VSP_060051 VSP_060055 VSP_060058"/>
    </isoform>
    <isoform>
        <id>X2JAU8-4</id>
        <name>4</name>
        <name>L</name>
        <sequence type="described" ref="VSP_060051 VSP_060058"/>
    </isoform>
    <isoform>
        <id>X2JAU8-5</id>
        <name>5</name>
        <name>K</name>
        <sequence type="described" ref="VSP_060052 VSP_060059"/>
    </isoform>
    <isoform>
        <id>X2JAU8-6</id>
        <name>6</name>
        <name>J</name>
        <sequence type="described" ref="VSP_060052"/>
    </isoform>
    <isoform>
        <id>X2JAU8-7</id>
        <name>7</name>
        <name>B</name>
        <sequence type="described" ref="VSP_060051 VSP_060056 VSP_060058 VSP_060059"/>
    </isoform>
    <isoform>
        <id>X2JAU8-8</id>
        <name>8</name>
        <name>C</name>
        <sequence type="described" ref="VSP_060053"/>
    </isoform>
    <isoform>
        <id>X2JAU8-9</id>
        <name>9</name>
        <name>F</name>
        <sequence type="described" ref="VSP_060054 VSP_060057"/>
    </isoform>
</comment>
<comment type="tissue specificity">
    <text evidence="4 10 12">Detected in larval body wall muscle (PubMed:29568072). Detected at the neuromuscular junction, on motoneuron axons and axon terminals, at synaptic boutons in the periactive zone surrounding the synapse (at protein level) (PubMed:14980202, PubMed:29568072). Detected on motoneuron axons and axon terminals, at synaptic boutons in the periactive zone surrounding the synapse (PubMed:26686642).</text>
</comment>
<comment type="developmental stage">
    <text evidence="4">Detected in embryonic brain, ventral nerve cord and sensory neurons, but not in muscle.</text>
</comment>
<comment type="domain">
    <text evidence="9 10">In the autoinhibited state, the SH3 domains are bound to the concave surface of the F-BAR domain and prevent promiscuous membrane binding.</text>
</comment>
<comment type="domain">
    <text evidence="8 10 11">Upon heterologous expression, the isolated F-BAR domain is localized at the cell membrane, and causes the formation of cellular protrusions (PubMed:23761074, PubMed:26686642). Contrary to F-BAR domains from other proteins, causes membrane flattening on giant unilamellar vesicles (in vitro) (PubMed:23761074, PubMed:26686642). Binds to membranes enriched in phosphatidylserine and phosphatidylinositides, such as phosphatidylinositol 3-phosphate, phosphatidylinositol 3,4-bisphosphate and phosphatidylinositol 4,5-bisphosphate (PubMed:23761074, PubMed:26686642, PubMed:27601635).</text>
</comment>
<comment type="disruption phenotype">
    <text evidence="4 5 6 7 10 12">No visible phenotype in adults at room temperature, but flies rapidly loose coordination and become paralyzed within three minutes at 38 degrees Celsius (PubMed:14980202). Larvae display overgrowth of neuromuscular junctions, with increased numbers of synaptic boutons and increased frequency and complexity of axon branching (PubMed:14980202, PubMed:18498733, PubMed:18701694, PubMed:21464232, PubMed:26686642, PubMed:29568072). The synaptic area and the number of reserve and readily releasable synaptic vesicles are decreased (PubMed:29568072).</text>
</comment>
<evidence type="ECO:0000255" key="1">
    <source>
        <dbReference type="PROSITE-ProRule" id="PRU00192"/>
    </source>
</evidence>
<evidence type="ECO:0000255" key="2">
    <source>
        <dbReference type="PROSITE-ProRule" id="PRU01077"/>
    </source>
</evidence>
<evidence type="ECO:0000256" key="3">
    <source>
        <dbReference type="SAM" id="MobiDB-lite"/>
    </source>
</evidence>
<evidence type="ECO:0000269" key="4">
    <source>
    </source>
</evidence>
<evidence type="ECO:0000269" key="5">
    <source>
    </source>
</evidence>
<evidence type="ECO:0000269" key="6">
    <source>
    </source>
</evidence>
<evidence type="ECO:0000269" key="7">
    <source>
    </source>
</evidence>
<evidence type="ECO:0000269" key="8">
    <source>
    </source>
</evidence>
<evidence type="ECO:0000269" key="9">
    <source>
    </source>
</evidence>
<evidence type="ECO:0000269" key="10">
    <source>
    </source>
</evidence>
<evidence type="ECO:0000269" key="11">
    <source>
    </source>
</evidence>
<evidence type="ECO:0000269" key="12">
    <source>
    </source>
</evidence>
<evidence type="ECO:0000303" key="13">
    <source>
    </source>
</evidence>
<evidence type="ECO:0000303" key="14">
    <source>
    </source>
</evidence>
<evidence type="ECO:0000303" key="15">
    <source>
    </source>
</evidence>
<evidence type="ECO:0000305" key="16">
    <source>
    </source>
</evidence>
<evidence type="ECO:0000312" key="17">
    <source>
        <dbReference type="EMBL" id="AHN58019.1"/>
    </source>
</evidence>
<evidence type="ECO:0000312" key="18">
    <source>
        <dbReference type="FlyBase" id="FBgn0263456"/>
    </source>
</evidence>
<evidence type="ECO:0000312" key="19">
    <source>
        <dbReference type="Proteomes" id="UP000000803"/>
    </source>
</evidence>
<feature type="chain" id="PRO_0000446275" description="Protein nervous wreck">
    <location>
        <begin position="1"/>
        <end position="1075"/>
    </location>
</feature>
<feature type="domain" description="F-BAR" evidence="2">
    <location>
        <begin position="11"/>
        <end position="289"/>
    </location>
</feature>
<feature type="domain" description="SH3 1" evidence="1">
    <location>
        <begin position="542"/>
        <end position="603"/>
    </location>
</feature>
<feature type="domain" description="SH3 2" evidence="1">
    <location>
        <begin position="658"/>
        <end position="721"/>
    </location>
</feature>
<feature type="region of interest" description="Disordered" evidence="3">
    <location>
        <begin position="361"/>
        <end position="381"/>
    </location>
</feature>
<feature type="region of interest" description="Disordered" evidence="3">
    <location>
        <begin position="431"/>
        <end position="536"/>
    </location>
</feature>
<feature type="region of interest" description="Disordered" evidence="3">
    <location>
        <begin position="722"/>
        <end position="747"/>
    </location>
</feature>
<feature type="region of interest" description="Disordered" evidence="3">
    <location>
        <begin position="769"/>
        <end position="837"/>
    </location>
</feature>
<feature type="region of interest" description="Disordered" evidence="3">
    <location>
        <begin position="864"/>
        <end position="917"/>
    </location>
</feature>
<feature type="compositionally biased region" description="Polar residues" evidence="3">
    <location>
        <begin position="431"/>
        <end position="453"/>
    </location>
</feature>
<feature type="compositionally biased region" description="Basic and acidic residues" evidence="3">
    <location>
        <begin position="469"/>
        <end position="482"/>
    </location>
</feature>
<feature type="compositionally biased region" description="Low complexity" evidence="3">
    <location>
        <begin position="493"/>
        <end position="512"/>
    </location>
</feature>
<feature type="compositionally biased region" description="Pro residues" evidence="3">
    <location>
        <begin position="733"/>
        <end position="747"/>
    </location>
</feature>
<feature type="compositionally biased region" description="Pro residues" evidence="3">
    <location>
        <begin position="809"/>
        <end position="818"/>
    </location>
</feature>
<feature type="compositionally biased region" description="Low complexity" evidence="3">
    <location>
        <begin position="819"/>
        <end position="837"/>
    </location>
</feature>
<feature type="compositionally biased region" description="Basic and acidic residues" evidence="3">
    <location>
        <begin position="883"/>
        <end position="897"/>
    </location>
</feature>
<feature type="splice variant" id="VSP_060051" description="In isoform 3, isoform 4 and isoform 7.">
    <location>
        <begin position="611"/>
        <end position="633"/>
    </location>
</feature>
<feature type="splice variant" id="VSP_060052" description="In isoform 5 and isoform 6.">
    <location>
        <begin position="774"/>
        <end position="792"/>
    </location>
</feature>
<feature type="splice variant" id="VSP_060053" description="In isoform 8.">
    <original>VLIQEPGMEDDLSDDGQPPPSLPPPQLAKAGGSAPGSGSKVEKGAAAGGANTLNLGMAQIIVTAATPMVEDGADKSFPPVGESDAQPVEPVSKEQPAEVAKKPDIAPKPLAKVAPQSAPAKEGNAGVRPVVSITLTEYPSCDAEDQQSFSEGTDSASVADVPVLQDAEDPFNEKAKGESGDGSGFEANFEANFDANFDDAFAGIGGGGGGGGGGGEQSNELDINGEAAGEAIVSGSAAGDEDIEAPKQVVGGRASIPEELDSNQLAHYHEHEIYYVDYSHGQ</original>
    <variation>GKCHILALSTGLLFPLSISLFKLYPYRF</variation>
    <location>
        <begin position="793"/>
        <end position="1074"/>
    </location>
</feature>
<feature type="splice variant" id="VSP_060054" description="In isoform 9.">
    <original>VLIQEPGMEDDLSDDGQPPPSLPPPQLAKAGGSAPGSGSKVEKGAAAGGANTLNLGMAQIIVTAATPMVEDGADKSFPPVGESDAQPVEPVSK</original>
    <variation>GQNQSQTTAKKGNLMNMLFYLNYLIPETFPDSVILSVGKSISTPLFESMSNPPLNYCSTFKMRFSSWYIEKNIQYIFSIRFLSTCLQLFPKDI</variation>
    <location>
        <begin position="793"/>
        <end position="885"/>
    </location>
</feature>
<feature type="splice variant" id="VSP_060055" description="In isoform 3.">
    <location>
        <begin position="848"/>
        <end position="872"/>
    </location>
</feature>
<feature type="splice variant" id="VSP_060056" description="In isoform 7.">
    <location>
        <begin position="848"/>
        <end position="871"/>
    </location>
</feature>
<feature type="splice variant" id="VSP_060057" description="In isoform 9.">
    <location>
        <begin position="886"/>
        <end position="1075"/>
    </location>
</feature>
<feature type="splice variant" id="VSP_060058" description="In isoform 3, isoform 4 and isoform 7.">
    <location>
        <begin position="915"/>
        <end position="935"/>
    </location>
</feature>
<feature type="splice variant" id="VSP_060059" description="In isoform 2, isoform 5 and isoform 7.">
    <original>HYHEHEIYYVDYSHGQL</original>
    <variation>RLQNLKESNA</variation>
    <location>
        <begin position="1059"/>
        <end position="1075"/>
    </location>
</feature>
<feature type="mutagenesis site" description="Decreased interaction with F-BAR domain. No effect on interaction with Dap160." evidence="10">
    <original>E</original>
    <variation>R</variation>
    <location>
        <position position="676"/>
    </location>
</feature>
<organism evidence="19">
    <name type="scientific">Drosophila melanogaster</name>
    <name type="common">Fruit fly</name>
    <dbReference type="NCBI Taxonomy" id="7227"/>
    <lineage>
        <taxon>Eukaryota</taxon>
        <taxon>Metazoa</taxon>
        <taxon>Ecdysozoa</taxon>
        <taxon>Arthropoda</taxon>
        <taxon>Hexapoda</taxon>
        <taxon>Insecta</taxon>
        <taxon>Pterygota</taxon>
        <taxon>Neoptera</taxon>
        <taxon>Endopterygota</taxon>
        <taxon>Diptera</taxon>
        <taxon>Brachycera</taxon>
        <taxon>Muscomorpha</taxon>
        <taxon>Ephydroidea</taxon>
        <taxon>Drosophilidae</taxon>
        <taxon>Drosophila</taxon>
        <taxon>Sophophora</taxon>
    </lineage>
</organism>
<proteinExistence type="evidence at protein level"/>
<accession>X2JAU8</accession>
<accession>M9NE66</accession>
<accession>M9NF56</accession>
<accession>M9NFQ1</accession>
<accession>Q9VSU8</accession>
<accession>X2J8V0</accession>
<accession>X2JC77</accession>
<accession>X2JCQ1</accession>
<accession>X2JGF9</accession>
<sequence>MQPPPRKGNYVKFLKNLHTEQVAKLQLKNQHECDLLEDIRQFTIKRSAVEKSYSESLLKISSQYLNKKIPNIPDIKMEGMEERWNMWSVWRTVLEENEKLARARLAAIEVFQQQIADEAKVLRDYKLAIAKRSLAGIVNVQKELHLSVGDVDKTKKSYFDEEHCAHDVRDKARDIEEKLKKKKGSFFQSITSLQKNSARVTSRKELLEEKSSGARNDYVLSLAAANAHQNRYFTVDLQTTMTTMENYVFERVAEYLMLMGRTELLTCSATQNSFGKIRDQAQQLTREYNLQCCYLFYPVLKQHIQYDFEACDNDPVRKVTAEHESAAETLTKEAKNLAGRVVKENASIRENAKKLALCQSLRDSGQRTDPNDPNGPDLDTKIEEFRDQIRRSETEKTKAEACLQCLRDGGINVDEWVQEAENMGVQELTRSASSISMRTDASGQGENPSSDSFYDSDKEETQAAAQTKPKQEQQLSRDRTFSDSEDEPEVRPSAAAASSAAAASSSMMASSAGGWDDPTEVNWGAGEEEDDKDEPIVPEPKEAIFKCTALYSYTAQNPDELTIVENEQLEVVGEGDGDGWLRARNYRGEEGYVPHNYLDIDQETAGSAFNGTSGNQLRSQISFSSVDYTVDNEDQTVDSMQSPDQVSVIMAPQKRVKSDVEWCIALYDYDATAEDELTFEEGDKIKIITKTAHGVDDGWWEGELDGKFGNFPSLVVEECDEMGEPLSEGGDESPPPTAAPTFALPPAPALPPEYAHELELELTEDMFGSQDTADEDSGYIPNGAAAPSIPPPVLIQEPGMEDDLSDDGQPPPSLPPPQLAKAGGSAPGSGSKVEKGAAAGGANTLNLGMAQIIVTAATPMVEDGADKSFPPVGESDAQPVEPVSKEQPAEVAKKPDIAPKPLAKVAPQSAPAKEGNAGVRPVVSITLTEYPSCDAEDQQSFSEGTDSASVADVPVLQDAEDPFNEKAKGESGDGSGFEANFEANFDANFDDAFAGIGGGGGGGGGGGEQSNELDINGEAAGEAIVSGSAAGDEDIEAPKQVVGGRASIPEELDSNQLAHYHEHEIYYVDYSHGQL</sequence>
<protein>
    <recommendedName>
        <fullName evidence="13 14 15">Protein nervous wreck</fullName>
        <shortName evidence="15">Nwk</shortName>
    </recommendedName>
</protein>
<name>NWK_DROME</name>
<gene>
    <name evidence="18" type="primary">nwk</name>
    <name evidence="18" type="ORF">CG43479</name>
</gene>